<protein>
    <recommendedName>
        <fullName evidence="1">Succinylglutamate desuccinylase</fullName>
        <ecNumber evidence="1">3.5.1.96</ecNumber>
    </recommendedName>
</protein>
<comment type="function">
    <text evidence="1">Transforms N(2)-succinylglutamate into succinate and glutamate.</text>
</comment>
<comment type="catalytic activity">
    <reaction evidence="1">
        <text>N-succinyl-L-glutamate + H2O = L-glutamate + succinate</text>
        <dbReference type="Rhea" id="RHEA:15169"/>
        <dbReference type="ChEBI" id="CHEBI:15377"/>
        <dbReference type="ChEBI" id="CHEBI:29985"/>
        <dbReference type="ChEBI" id="CHEBI:30031"/>
        <dbReference type="ChEBI" id="CHEBI:58763"/>
        <dbReference type="EC" id="3.5.1.96"/>
    </reaction>
</comment>
<comment type="cofactor">
    <cofactor evidence="1">
        <name>Zn(2+)</name>
        <dbReference type="ChEBI" id="CHEBI:29105"/>
    </cofactor>
    <text evidence="1">Binds 1 zinc ion per subunit.</text>
</comment>
<comment type="pathway">
    <text evidence="1">Amino-acid degradation; L-arginine degradation via AST pathway; L-glutamate and succinate from L-arginine: step 5/5.</text>
</comment>
<comment type="similarity">
    <text evidence="1">Belongs to the AspA/AstE family. Succinylglutamate desuccinylase subfamily.</text>
</comment>
<sequence>MLDFLAITLSGKPPQVIQGETVNLKWQWLGEGILTLVPHRSYTQSVVISAGIHGNETAPIEILNQLVTDLLAGQLPLSVRLLVLLGNPPAIRKGKRYLSNDINRMFGGRYQHYTPSDETRRASTLEQRVMAFFQASHTSERLHYDLHTAIRGSYHPRFGLLPYQQTPYSAAMFRWLRDIELDALVMHTSAGGTFAHFSSERCQAASCTLELGKALPFGENQLSQFSAITQGLRSLVSDSALPARKTENMKYYRVVKSLLRQHPDFKLRVAEDTVNFTRFAQGTLLTEQPNDNYRVEHPYEWILFPNPHVALGLRAGMMLVKMCESELPIT</sequence>
<accession>B2K298</accession>
<gene>
    <name evidence="1" type="primary">astE</name>
    <name type="ordered locus">YPTS_2015</name>
</gene>
<keyword id="KW-0056">Arginine metabolism</keyword>
<keyword id="KW-0378">Hydrolase</keyword>
<keyword id="KW-0479">Metal-binding</keyword>
<keyword id="KW-0862">Zinc</keyword>
<evidence type="ECO:0000255" key="1">
    <source>
        <dbReference type="HAMAP-Rule" id="MF_00767"/>
    </source>
</evidence>
<proteinExistence type="inferred from homology"/>
<reference key="1">
    <citation type="submission" date="2008-04" db="EMBL/GenBank/DDBJ databases">
        <title>Complete sequence of Yersinia pseudotuberculosis PB1/+.</title>
        <authorList>
            <person name="Copeland A."/>
            <person name="Lucas S."/>
            <person name="Lapidus A."/>
            <person name="Glavina del Rio T."/>
            <person name="Dalin E."/>
            <person name="Tice H."/>
            <person name="Bruce D."/>
            <person name="Goodwin L."/>
            <person name="Pitluck S."/>
            <person name="Munk A.C."/>
            <person name="Brettin T."/>
            <person name="Detter J.C."/>
            <person name="Han C."/>
            <person name="Tapia R."/>
            <person name="Schmutz J."/>
            <person name="Larimer F."/>
            <person name="Land M."/>
            <person name="Hauser L."/>
            <person name="Challacombe J.F."/>
            <person name="Green L."/>
            <person name="Lindler L.E."/>
            <person name="Nikolich M.P."/>
            <person name="Richardson P."/>
        </authorList>
    </citation>
    <scope>NUCLEOTIDE SEQUENCE [LARGE SCALE GENOMIC DNA]</scope>
    <source>
        <strain>PB1/+</strain>
    </source>
</reference>
<organism>
    <name type="scientific">Yersinia pseudotuberculosis serotype IB (strain PB1/+)</name>
    <dbReference type="NCBI Taxonomy" id="502801"/>
    <lineage>
        <taxon>Bacteria</taxon>
        <taxon>Pseudomonadati</taxon>
        <taxon>Pseudomonadota</taxon>
        <taxon>Gammaproteobacteria</taxon>
        <taxon>Enterobacterales</taxon>
        <taxon>Yersiniaceae</taxon>
        <taxon>Yersinia</taxon>
    </lineage>
</organism>
<feature type="chain" id="PRO_1000133649" description="Succinylglutamate desuccinylase">
    <location>
        <begin position="1"/>
        <end position="330"/>
    </location>
</feature>
<feature type="active site" evidence="1">
    <location>
        <position position="210"/>
    </location>
</feature>
<feature type="binding site" evidence="1">
    <location>
        <position position="53"/>
    </location>
    <ligand>
        <name>Zn(2+)</name>
        <dbReference type="ChEBI" id="CHEBI:29105"/>
    </ligand>
</feature>
<feature type="binding site" evidence="1">
    <location>
        <position position="56"/>
    </location>
    <ligand>
        <name>Zn(2+)</name>
        <dbReference type="ChEBI" id="CHEBI:29105"/>
    </ligand>
</feature>
<feature type="binding site" evidence="1">
    <location>
        <position position="147"/>
    </location>
    <ligand>
        <name>Zn(2+)</name>
        <dbReference type="ChEBI" id="CHEBI:29105"/>
    </ligand>
</feature>
<dbReference type="EC" id="3.5.1.96" evidence="1"/>
<dbReference type="EMBL" id="CP001048">
    <property type="protein sequence ID" value="ACC88981.1"/>
    <property type="molecule type" value="Genomic_DNA"/>
</dbReference>
<dbReference type="RefSeq" id="WP_002212028.1">
    <property type="nucleotide sequence ID" value="NZ_CP009780.1"/>
</dbReference>
<dbReference type="SMR" id="B2K298"/>
<dbReference type="GeneID" id="49786048"/>
<dbReference type="KEGG" id="ypb:YPTS_2015"/>
<dbReference type="PATRIC" id="fig|502801.10.peg.1401"/>
<dbReference type="UniPathway" id="UPA00185">
    <property type="reaction ID" value="UER00283"/>
</dbReference>
<dbReference type="GO" id="GO:0016788">
    <property type="term" value="F:hydrolase activity, acting on ester bonds"/>
    <property type="evidence" value="ECO:0007669"/>
    <property type="project" value="UniProtKB-UniRule"/>
</dbReference>
<dbReference type="GO" id="GO:0009017">
    <property type="term" value="F:succinylglutamate desuccinylase activity"/>
    <property type="evidence" value="ECO:0007669"/>
    <property type="project" value="UniProtKB-EC"/>
</dbReference>
<dbReference type="GO" id="GO:0008270">
    <property type="term" value="F:zinc ion binding"/>
    <property type="evidence" value="ECO:0007669"/>
    <property type="project" value="UniProtKB-UniRule"/>
</dbReference>
<dbReference type="GO" id="GO:0019544">
    <property type="term" value="P:arginine catabolic process to glutamate"/>
    <property type="evidence" value="ECO:0007669"/>
    <property type="project" value="UniProtKB-UniRule"/>
</dbReference>
<dbReference type="GO" id="GO:0019545">
    <property type="term" value="P:arginine catabolic process to succinate"/>
    <property type="evidence" value="ECO:0007669"/>
    <property type="project" value="UniProtKB-UniRule"/>
</dbReference>
<dbReference type="CDD" id="cd03855">
    <property type="entry name" value="M14_ASTE"/>
    <property type="match status" value="1"/>
</dbReference>
<dbReference type="FunFam" id="3.40.630.10:FF:000017">
    <property type="entry name" value="Succinylglutamate desuccinylase"/>
    <property type="match status" value="1"/>
</dbReference>
<dbReference type="Gene3D" id="3.40.630.10">
    <property type="entry name" value="Zn peptidases"/>
    <property type="match status" value="1"/>
</dbReference>
<dbReference type="HAMAP" id="MF_00767">
    <property type="entry name" value="Arg_catab_AstE"/>
    <property type="match status" value="1"/>
</dbReference>
<dbReference type="InterPro" id="IPR050178">
    <property type="entry name" value="AspA/AstE_fam"/>
</dbReference>
<dbReference type="InterPro" id="IPR055438">
    <property type="entry name" value="AstE_AspA_cat"/>
</dbReference>
<dbReference type="InterPro" id="IPR007036">
    <property type="entry name" value="Aste_AspA_hybrid_dom"/>
</dbReference>
<dbReference type="InterPro" id="IPR016681">
    <property type="entry name" value="SuccinylGlu_desuccinylase"/>
</dbReference>
<dbReference type="NCBIfam" id="TIGR03242">
    <property type="entry name" value="arg_catab_astE"/>
    <property type="match status" value="1"/>
</dbReference>
<dbReference type="NCBIfam" id="NF003706">
    <property type="entry name" value="PRK05324.1"/>
    <property type="match status" value="1"/>
</dbReference>
<dbReference type="PANTHER" id="PTHR15162">
    <property type="entry name" value="ASPARTOACYLASE"/>
    <property type="match status" value="1"/>
</dbReference>
<dbReference type="PANTHER" id="PTHR15162:SF7">
    <property type="entry name" value="SUCCINYLGLUTAMATE DESUCCINYLASE"/>
    <property type="match status" value="1"/>
</dbReference>
<dbReference type="Pfam" id="PF24827">
    <property type="entry name" value="AstE_AspA_cat"/>
    <property type="match status" value="1"/>
</dbReference>
<dbReference type="Pfam" id="PF04952">
    <property type="entry name" value="AstE_AspA_hybrid"/>
    <property type="match status" value="1"/>
</dbReference>
<dbReference type="PIRSF" id="PIRSF017020">
    <property type="entry name" value="AstE"/>
    <property type="match status" value="1"/>
</dbReference>
<dbReference type="SUPFAM" id="SSF53187">
    <property type="entry name" value="Zn-dependent exopeptidases"/>
    <property type="match status" value="1"/>
</dbReference>
<name>ASTE_YERPB</name>